<name>RECA_STAES</name>
<comment type="function">
    <text evidence="1">Can catalyze the hydrolysis of ATP in the presence of single-stranded DNA, the ATP-dependent uptake of single-stranded DNA by duplex DNA, and the ATP-dependent hybridization of homologous single-stranded DNAs. It interacts with LexA causing its activation and leading to its autocatalytic cleavage.</text>
</comment>
<comment type="subcellular location">
    <subcellularLocation>
        <location evidence="1">Cytoplasm</location>
    </subcellularLocation>
</comment>
<comment type="similarity">
    <text evidence="1">Belongs to the RecA family.</text>
</comment>
<sequence>MDNERQKALDTVIKNMEKSFGKGAVMKLGDNKGRRVSSTSSGSVTVDNALGVGGYPKGRIIEIYGPESSGKTTVALHAIAEVQKNGGVAAFIDAEHALDPVYAQALGVDIDNLYLSQPDHGEQGLEIAEAFVRSGAVDIVVVDSVAALTPKAEIEGEMGDTHVGLQARLMSQALRKLSGAISKSNTTAIFINQIREKVGVMFGNPETTPGGRALKFYSSVRLEVRRAEQLKQGQDIVGNRTKIKVVKNKVAPPFRVAEVDIMYGQGISKEGELIDLGVENDIVDKSGAWYSYNGDRMGQGKENVKNYLKENPQIKEEIDRKLREKLGIFDGDVDENENEDDSPKTLFDE</sequence>
<dbReference type="EMBL" id="AE015929">
    <property type="protein sequence ID" value="AAO04560.1"/>
    <property type="molecule type" value="Genomic_DNA"/>
</dbReference>
<dbReference type="RefSeq" id="NP_764518.1">
    <property type="nucleotide sequence ID" value="NC_004461.1"/>
</dbReference>
<dbReference type="RefSeq" id="WP_002439552.1">
    <property type="nucleotide sequence ID" value="NZ_WBME01000001.1"/>
</dbReference>
<dbReference type="SMR" id="Q8CPF4"/>
<dbReference type="GeneID" id="50018903"/>
<dbReference type="KEGG" id="sep:SE_0963"/>
<dbReference type="PATRIC" id="fig|176280.10.peg.937"/>
<dbReference type="eggNOG" id="COG0468">
    <property type="taxonomic scope" value="Bacteria"/>
</dbReference>
<dbReference type="HOGENOM" id="CLU_040469_3_2_9"/>
<dbReference type="OrthoDB" id="9776733at2"/>
<dbReference type="Proteomes" id="UP000001411">
    <property type="component" value="Chromosome"/>
</dbReference>
<dbReference type="GO" id="GO:0005829">
    <property type="term" value="C:cytosol"/>
    <property type="evidence" value="ECO:0007669"/>
    <property type="project" value="TreeGrafter"/>
</dbReference>
<dbReference type="GO" id="GO:0005524">
    <property type="term" value="F:ATP binding"/>
    <property type="evidence" value="ECO:0007669"/>
    <property type="project" value="UniProtKB-UniRule"/>
</dbReference>
<dbReference type="GO" id="GO:0016887">
    <property type="term" value="F:ATP hydrolysis activity"/>
    <property type="evidence" value="ECO:0007669"/>
    <property type="project" value="InterPro"/>
</dbReference>
<dbReference type="GO" id="GO:0140664">
    <property type="term" value="F:ATP-dependent DNA damage sensor activity"/>
    <property type="evidence" value="ECO:0007669"/>
    <property type="project" value="InterPro"/>
</dbReference>
<dbReference type="GO" id="GO:0003684">
    <property type="term" value="F:damaged DNA binding"/>
    <property type="evidence" value="ECO:0007669"/>
    <property type="project" value="UniProtKB-UniRule"/>
</dbReference>
<dbReference type="GO" id="GO:0003697">
    <property type="term" value="F:single-stranded DNA binding"/>
    <property type="evidence" value="ECO:0007669"/>
    <property type="project" value="UniProtKB-UniRule"/>
</dbReference>
<dbReference type="GO" id="GO:0006310">
    <property type="term" value="P:DNA recombination"/>
    <property type="evidence" value="ECO:0007669"/>
    <property type="project" value="UniProtKB-UniRule"/>
</dbReference>
<dbReference type="GO" id="GO:0006281">
    <property type="term" value="P:DNA repair"/>
    <property type="evidence" value="ECO:0007669"/>
    <property type="project" value="UniProtKB-UniRule"/>
</dbReference>
<dbReference type="GO" id="GO:0009432">
    <property type="term" value="P:SOS response"/>
    <property type="evidence" value="ECO:0007669"/>
    <property type="project" value="UniProtKB-UniRule"/>
</dbReference>
<dbReference type="CDD" id="cd00983">
    <property type="entry name" value="RecA"/>
    <property type="match status" value="1"/>
</dbReference>
<dbReference type="FunFam" id="3.40.50.300:FF:000087">
    <property type="entry name" value="Recombinase RecA"/>
    <property type="match status" value="1"/>
</dbReference>
<dbReference type="Gene3D" id="3.40.50.300">
    <property type="entry name" value="P-loop containing nucleotide triphosphate hydrolases"/>
    <property type="match status" value="1"/>
</dbReference>
<dbReference type="HAMAP" id="MF_00268">
    <property type="entry name" value="RecA"/>
    <property type="match status" value="1"/>
</dbReference>
<dbReference type="InterPro" id="IPR003593">
    <property type="entry name" value="AAA+_ATPase"/>
</dbReference>
<dbReference type="InterPro" id="IPR013765">
    <property type="entry name" value="DNA_recomb/repair_RecA"/>
</dbReference>
<dbReference type="InterPro" id="IPR020584">
    <property type="entry name" value="DNA_recomb/repair_RecA_CS"/>
</dbReference>
<dbReference type="InterPro" id="IPR027417">
    <property type="entry name" value="P-loop_NTPase"/>
</dbReference>
<dbReference type="InterPro" id="IPR049261">
    <property type="entry name" value="RecA-like_C"/>
</dbReference>
<dbReference type="InterPro" id="IPR049428">
    <property type="entry name" value="RecA-like_N"/>
</dbReference>
<dbReference type="InterPro" id="IPR020588">
    <property type="entry name" value="RecA_ATP-bd"/>
</dbReference>
<dbReference type="InterPro" id="IPR023400">
    <property type="entry name" value="RecA_C_sf"/>
</dbReference>
<dbReference type="InterPro" id="IPR020587">
    <property type="entry name" value="RecA_monomer-monomer_interface"/>
</dbReference>
<dbReference type="NCBIfam" id="TIGR02012">
    <property type="entry name" value="tigrfam_recA"/>
    <property type="match status" value="1"/>
</dbReference>
<dbReference type="PANTHER" id="PTHR45900:SF1">
    <property type="entry name" value="MITOCHONDRIAL DNA REPAIR PROTEIN RECA HOMOLOG-RELATED"/>
    <property type="match status" value="1"/>
</dbReference>
<dbReference type="PANTHER" id="PTHR45900">
    <property type="entry name" value="RECA"/>
    <property type="match status" value="1"/>
</dbReference>
<dbReference type="Pfam" id="PF00154">
    <property type="entry name" value="RecA"/>
    <property type="match status" value="1"/>
</dbReference>
<dbReference type="Pfam" id="PF21096">
    <property type="entry name" value="RecA_C"/>
    <property type="match status" value="1"/>
</dbReference>
<dbReference type="PRINTS" id="PR00142">
    <property type="entry name" value="RECA"/>
</dbReference>
<dbReference type="SMART" id="SM00382">
    <property type="entry name" value="AAA"/>
    <property type="match status" value="1"/>
</dbReference>
<dbReference type="SUPFAM" id="SSF52540">
    <property type="entry name" value="P-loop containing nucleoside triphosphate hydrolases"/>
    <property type="match status" value="1"/>
</dbReference>
<dbReference type="SUPFAM" id="SSF54752">
    <property type="entry name" value="RecA protein, C-terminal domain"/>
    <property type="match status" value="1"/>
</dbReference>
<dbReference type="PROSITE" id="PS00321">
    <property type="entry name" value="RECA_1"/>
    <property type="match status" value="1"/>
</dbReference>
<dbReference type="PROSITE" id="PS50162">
    <property type="entry name" value="RECA_2"/>
    <property type="match status" value="1"/>
</dbReference>
<dbReference type="PROSITE" id="PS50163">
    <property type="entry name" value="RECA_3"/>
    <property type="match status" value="1"/>
</dbReference>
<feature type="chain" id="PRO_0000122845" description="Protein RecA">
    <location>
        <begin position="1"/>
        <end position="349"/>
    </location>
</feature>
<feature type="region of interest" description="Disordered" evidence="2">
    <location>
        <begin position="329"/>
        <end position="349"/>
    </location>
</feature>
<feature type="compositionally biased region" description="Acidic residues" evidence="2">
    <location>
        <begin position="331"/>
        <end position="340"/>
    </location>
</feature>
<feature type="binding site" evidence="1">
    <location>
        <begin position="65"/>
        <end position="72"/>
    </location>
    <ligand>
        <name>ATP</name>
        <dbReference type="ChEBI" id="CHEBI:30616"/>
    </ligand>
</feature>
<keyword id="KW-0067">ATP-binding</keyword>
<keyword id="KW-0963">Cytoplasm</keyword>
<keyword id="KW-0227">DNA damage</keyword>
<keyword id="KW-0233">DNA recombination</keyword>
<keyword id="KW-0234">DNA repair</keyword>
<keyword id="KW-0238">DNA-binding</keyword>
<keyword id="KW-0547">Nucleotide-binding</keyword>
<keyword id="KW-0742">SOS response</keyword>
<evidence type="ECO:0000255" key="1">
    <source>
        <dbReference type="HAMAP-Rule" id="MF_00268"/>
    </source>
</evidence>
<evidence type="ECO:0000256" key="2">
    <source>
        <dbReference type="SAM" id="MobiDB-lite"/>
    </source>
</evidence>
<accession>Q8CPF4</accession>
<proteinExistence type="inferred from homology"/>
<gene>
    <name evidence="1" type="primary">recA</name>
    <name type="ordered locus">SE_0963</name>
</gene>
<organism>
    <name type="scientific">Staphylococcus epidermidis (strain ATCC 12228 / FDA PCI 1200)</name>
    <dbReference type="NCBI Taxonomy" id="176280"/>
    <lineage>
        <taxon>Bacteria</taxon>
        <taxon>Bacillati</taxon>
        <taxon>Bacillota</taxon>
        <taxon>Bacilli</taxon>
        <taxon>Bacillales</taxon>
        <taxon>Staphylococcaceae</taxon>
        <taxon>Staphylococcus</taxon>
    </lineage>
</organism>
<protein>
    <recommendedName>
        <fullName evidence="1">Protein RecA</fullName>
    </recommendedName>
    <alternativeName>
        <fullName evidence="1">Recombinase A</fullName>
    </alternativeName>
</protein>
<reference key="1">
    <citation type="journal article" date="2003" name="Mol. Microbiol.">
        <title>Genome-based analysis of virulence genes in a non-biofilm-forming Staphylococcus epidermidis strain (ATCC 12228).</title>
        <authorList>
            <person name="Zhang Y.-Q."/>
            <person name="Ren S.-X."/>
            <person name="Li H.-L."/>
            <person name="Wang Y.-X."/>
            <person name="Fu G."/>
            <person name="Yang J."/>
            <person name="Qin Z.-Q."/>
            <person name="Miao Y.-G."/>
            <person name="Wang W.-Y."/>
            <person name="Chen R.-S."/>
            <person name="Shen Y."/>
            <person name="Chen Z."/>
            <person name="Yuan Z.-H."/>
            <person name="Zhao G.-P."/>
            <person name="Qu D."/>
            <person name="Danchin A."/>
            <person name="Wen Y.-M."/>
        </authorList>
    </citation>
    <scope>NUCLEOTIDE SEQUENCE [LARGE SCALE GENOMIC DNA]</scope>
    <source>
        <strain>ATCC 12228 / FDA PCI 1200</strain>
    </source>
</reference>